<protein>
    <recommendedName>
        <fullName>Phosphoenolpyruvate carboxykinase (ATP)</fullName>
        <ecNumber>4.1.1.49</ecNumber>
    </recommendedName>
    <alternativeName>
        <fullName>Acetate utilization protein 6</fullName>
    </alternativeName>
</protein>
<organism>
    <name type="scientific">Neurospora crassa (strain ATCC 24698 / 74-OR23-1A / CBS 708.71 / DSM 1257 / FGSC 987)</name>
    <dbReference type="NCBI Taxonomy" id="367110"/>
    <lineage>
        <taxon>Eukaryota</taxon>
        <taxon>Fungi</taxon>
        <taxon>Dikarya</taxon>
        <taxon>Ascomycota</taxon>
        <taxon>Pezizomycotina</taxon>
        <taxon>Sordariomycetes</taxon>
        <taxon>Sordariomycetidae</taxon>
        <taxon>Sordariales</taxon>
        <taxon>Sordariaceae</taxon>
        <taxon>Neurospora</taxon>
    </lineage>
</organism>
<name>PCKA_NEUCR</name>
<evidence type="ECO:0000255" key="1"/>
<evidence type="ECO:0000256" key="2">
    <source>
        <dbReference type="SAM" id="MobiDB-lite"/>
    </source>
</evidence>
<evidence type="ECO:0000305" key="3"/>
<feature type="chain" id="PRO_0000203874" description="Phosphoenolpyruvate carboxykinase (ATP)">
    <location>
        <begin position="1"/>
        <end position="605"/>
    </location>
</feature>
<feature type="region of interest" description="Disordered" evidence="2">
    <location>
        <begin position="27"/>
        <end position="67"/>
    </location>
</feature>
<feature type="compositionally biased region" description="Low complexity" evidence="2">
    <location>
        <begin position="27"/>
        <end position="48"/>
    </location>
</feature>
<feature type="binding site" evidence="1">
    <location>
        <begin position="307"/>
        <end position="314"/>
    </location>
    <ligand>
        <name>ATP</name>
        <dbReference type="ChEBI" id="CHEBI:30616"/>
    </ligand>
</feature>
<keyword id="KW-0067">ATP-binding</keyword>
<keyword id="KW-0210">Decarboxylase</keyword>
<keyword id="KW-0312">Gluconeogenesis</keyword>
<keyword id="KW-0456">Lyase</keyword>
<keyword id="KW-0547">Nucleotide-binding</keyword>
<keyword id="KW-1185">Reference proteome</keyword>
<gene>
    <name type="primary">acu-6</name>
    <name type="synonym">pck1</name>
    <name type="ORF">NCU09873</name>
</gene>
<comment type="catalytic activity">
    <reaction>
        <text>oxaloacetate + ATP = phosphoenolpyruvate + ADP + CO2</text>
        <dbReference type="Rhea" id="RHEA:18617"/>
        <dbReference type="ChEBI" id="CHEBI:16452"/>
        <dbReference type="ChEBI" id="CHEBI:16526"/>
        <dbReference type="ChEBI" id="CHEBI:30616"/>
        <dbReference type="ChEBI" id="CHEBI:58702"/>
        <dbReference type="ChEBI" id="CHEBI:456216"/>
        <dbReference type="EC" id="4.1.1.49"/>
    </reaction>
</comment>
<comment type="pathway">
    <text>Carbohydrate biosynthesis; gluconeogenesis.</text>
</comment>
<comment type="similarity">
    <text evidence="3">Belongs to the phosphoenolpyruvate carboxykinase (ATP) family.</text>
</comment>
<dbReference type="EC" id="4.1.1.49"/>
<dbReference type="EMBL" id="CM002241">
    <property type="protein sequence ID" value="EAA30919.2"/>
    <property type="molecule type" value="Genomic_DNA"/>
</dbReference>
<dbReference type="RefSeq" id="XP_960155.2">
    <property type="nucleotide sequence ID" value="XM_955062.3"/>
</dbReference>
<dbReference type="SMR" id="Q7RVS9"/>
<dbReference type="FunCoup" id="Q7RVS9">
    <property type="interactions" value="221"/>
</dbReference>
<dbReference type="STRING" id="367110.Q7RVS9"/>
<dbReference type="PaxDb" id="5141-EFNCRP00000009773"/>
<dbReference type="EnsemblFungi" id="EAA30919">
    <property type="protein sequence ID" value="EAA30919"/>
    <property type="gene ID" value="NCU09873"/>
</dbReference>
<dbReference type="GeneID" id="3876302"/>
<dbReference type="KEGG" id="ncr:NCU09873"/>
<dbReference type="VEuPathDB" id="FungiDB:NCU09873"/>
<dbReference type="HOGENOM" id="CLU_018247_2_0_1"/>
<dbReference type="InParanoid" id="Q7RVS9"/>
<dbReference type="OrthoDB" id="184182at2759"/>
<dbReference type="UniPathway" id="UPA00138"/>
<dbReference type="Proteomes" id="UP000001805">
    <property type="component" value="Chromosome 5, Linkage Group VI"/>
</dbReference>
<dbReference type="GO" id="GO:0005829">
    <property type="term" value="C:cytosol"/>
    <property type="evidence" value="ECO:0000318"/>
    <property type="project" value="GO_Central"/>
</dbReference>
<dbReference type="GO" id="GO:0005524">
    <property type="term" value="F:ATP binding"/>
    <property type="evidence" value="ECO:0007669"/>
    <property type="project" value="UniProtKB-KW"/>
</dbReference>
<dbReference type="GO" id="GO:0004612">
    <property type="term" value="F:phosphoenolpyruvate carboxykinase (ATP) activity"/>
    <property type="evidence" value="ECO:0000318"/>
    <property type="project" value="GO_Central"/>
</dbReference>
<dbReference type="GO" id="GO:0006094">
    <property type="term" value="P:gluconeogenesis"/>
    <property type="evidence" value="ECO:0000318"/>
    <property type="project" value="GO_Central"/>
</dbReference>
<dbReference type="CDD" id="cd00484">
    <property type="entry name" value="PEPCK_ATP"/>
    <property type="match status" value="1"/>
</dbReference>
<dbReference type="FunFam" id="2.170.8.10:FF:000001">
    <property type="entry name" value="Phosphoenolpyruvate carboxykinase (ATP)"/>
    <property type="match status" value="1"/>
</dbReference>
<dbReference type="FunFam" id="3.40.449.10:FF:000002">
    <property type="entry name" value="Phosphoenolpyruvate carboxykinase [ATP]"/>
    <property type="match status" value="1"/>
</dbReference>
<dbReference type="Gene3D" id="3.90.228.20">
    <property type="match status" value="1"/>
</dbReference>
<dbReference type="Gene3D" id="3.40.449.10">
    <property type="entry name" value="Phosphoenolpyruvate Carboxykinase, domain 1"/>
    <property type="match status" value="1"/>
</dbReference>
<dbReference type="Gene3D" id="2.170.8.10">
    <property type="entry name" value="Phosphoenolpyruvate Carboxykinase, domain 2"/>
    <property type="match status" value="1"/>
</dbReference>
<dbReference type="HAMAP" id="MF_00453">
    <property type="entry name" value="PEPCK_ATP"/>
    <property type="match status" value="1"/>
</dbReference>
<dbReference type="InterPro" id="IPR001272">
    <property type="entry name" value="PEP_carboxykinase_ATP"/>
</dbReference>
<dbReference type="InterPro" id="IPR013035">
    <property type="entry name" value="PEP_carboxykinase_C"/>
</dbReference>
<dbReference type="InterPro" id="IPR008210">
    <property type="entry name" value="PEP_carboxykinase_N"/>
</dbReference>
<dbReference type="InterPro" id="IPR015994">
    <property type="entry name" value="PEPCK_ATP_CS"/>
</dbReference>
<dbReference type="NCBIfam" id="TIGR00224">
    <property type="entry name" value="pckA"/>
    <property type="match status" value="1"/>
</dbReference>
<dbReference type="NCBIfam" id="NF006820">
    <property type="entry name" value="PRK09344.1-2"/>
    <property type="match status" value="1"/>
</dbReference>
<dbReference type="NCBIfam" id="NF006821">
    <property type="entry name" value="PRK09344.1-3"/>
    <property type="match status" value="1"/>
</dbReference>
<dbReference type="PANTHER" id="PTHR30031:SF0">
    <property type="entry name" value="PHOSPHOENOLPYRUVATE CARBOXYKINASE (ATP)"/>
    <property type="match status" value="1"/>
</dbReference>
<dbReference type="PANTHER" id="PTHR30031">
    <property type="entry name" value="PHOSPHOENOLPYRUVATE CARBOXYKINASE ATP"/>
    <property type="match status" value="1"/>
</dbReference>
<dbReference type="Pfam" id="PF01293">
    <property type="entry name" value="PEPCK_ATP"/>
    <property type="match status" value="1"/>
</dbReference>
<dbReference type="PIRSF" id="PIRSF006294">
    <property type="entry name" value="PEP_crbxkin"/>
    <property type="match status" value="1"/>
</dbReference>
<dbReference type="SUPFAM" id="SSF68923">
    <property type="entry name" value="PEP carboxykinase N-terminal domain"/>
    <property type="match status" value="1"/>
</dbReference>
<dbReference type="SUPFAM" id="SSF53795">
    <property type="entry name" value="PEP carboxykinase-like"/>
    <property type="match status" value="1"/>
</dbReference>
<dbReference type="PROSITE" id="PS00532">
    <property type="entry name" value="PEPCK_ATP"/>
    <property type="match status" value="1"/>
</dbReference>
<proteinExistence type="inferred from homology"/>
<accession>Q7RVS9</accession>
<reference key="1">
    <citation type="journal article" date="2003" name="Nature">
        <title>The genome sequence of the filamentous fungus Neurospora crassa.</title>
        <authorList>
            <person name="Galagan J.E."/>
            <person name="Calvo S.E."/>
            <person name="Borkovich K.A."/>
            <person name="Selker E.U."/>
            <person name="Read N.D."/>
            <person name="Jaffe D.B."/>
            <person name="FitzHugh W."/>
            <person name="Ma L.-J."/>
            <person name="Smirnov S."/>
            <person name="Purcell S."/>
            <person name="Rehman B."/>
            <person name="Elkins T."/>
            <person name="Engels R."/>
            <person name="Wang S."/>
            <person name="Nielsen C.B."/>
            <person name="Butler J."/>
            <person name="Endrizzi M."/>
            <person name="Qui D."/>
            <person name="Ianakiev P."/>
            <person name="Bell-Pedersen D."/>
            <person name="Nelson M.A."/>
            <person name="Werner-Washburne M."/>
            <person name="Selitrennikoff C.P."/>
            <person name="Kinsey J.A."/>
            <person name="Braun E.L."/>
            <person name="Zelter A."/>
            <person name="Schulte U."/>
            <person name="Kothe G.O."/>
            <person name="Jedd G."/>
            <person name="Mewes H.-W."/>
            <person name="Staben C."/>
            <person name="Marcotte E."/>
            <person name="Greenberg D."/>
            <person name="Roy A."/>
            <person name="Foley K."/>
            <person name="Naylor J."/>
            <person name="Stange-Thomann N."/>
            <person name="Barrett R."/>
            <person name="Gnerre S."/>
            <person name="Kamal M."/>
            <person name="Kamvysselis M."/>
            <person name="Mauceli E.W."/>
            <person name="Bielke C."/>
            <person name="Rudd S."/>
            <person name="Frishman D."/>
            <person name="Krystofova S."/>
            <person name="Rasmussen C."/>
            <person name="Metzenberg R.L."/>
            <person name="Perkins D.D."/>
            <person name="Kroken S."/>
            <person name="Cogoni C."/>
            <person name="Macino G."/>
            <person name="Catcheside D.E.A."/>
            <person name="Li W."/>
            <person name="Pratt R.J."/>
            <person name="Osmani S.A."/>
            <person name="DeSouza C.P.C."/>
            <person name="Glass N.L."/>
            <person name="Orbach M.J."/>
            <person name="Berglund J.A."/>
            <person name="Voelker R."/>
            <person name="Yarden O."/>
            <person name="Plamann M."/>
            <person name="Seiler S."/>
            <person name="Dunlap J.C."/>
            <person name="Radford A."/>
            <person name="Aramayo R."/>
            <person name="Natvig D.O."/>
            <person name="Alex L.A."/>
            <person name="Mannhaupt G."/>
            <person name="Ebbole D.J."/>
            <person name="Freitag M."/>
            <person name="Paulsen I."/>
            <person name="Sachs M.S."/>
            <person name="Lander E.S."/>
            <person name="Nusbaum C."/>
            <person name="Birren B.W."/>
        </authorList>
    </citation>
    <scope>NUCLEOTIDE SEQUENCE [LARGE SCALE GENOMIC DNA]</scope>
    <source>
        <strain>ATCC 24698 / 74-OR23-1A / CBS 708.71 / DSM 1257 / FGSC 987</strain>
    </source>
</reference>
<sequence>MGDPVIRTASPYTNPIIKCPRLQRLSSGPSSSFINNNNSNNNNNKSSNMFNHDHVNKTNLHPGGVKPHVEHTELEEELHQKAHIDYDRVAIIANPSVASLYEDALVYETGTAITSSGALTAYSGKKTGRSPSDKRIVKEPSSENDIWWGPVNKPMSPEVWKINRERAVDYLNTRNRIYVVDGYAGWDEKYRIRVRVVCARAYHALFMRNMLIRPPREELEHFHPDYTIYNAGSFPANRYTEGMSSSTSVAINFAEKEMVILGTEYAGEMKKGIFTVMFYEGPVKHNILTLHSSANEGKDGDVTLFFGLSGTGKTTLSADPNRRLIGDDEHCWSDRGVFNIEGGCYAKTIGLSAEKEPDIFNAIRYGSVLENVVFNPETREVDYGDATLTENTRCAYPIEYIPNAKIPCLSPNHPKNIILLTCDARGVLPPISKLDSAQTMFHFISGYTSKMAGTEDGILEPQATFSSCFAQPFLALHPMRYAKMLAEKIENHNANAWLLNTGWVGAGFAQGGKRCPLKYTRAILDAIHSGELANVEYENYEVFNLQVPKSCPGVPSELLNPKTAWTAGANSFDTEVKKLGGLFLENFKKYESEATEDVIKAGPVV</sequence>